<sequence>MRCIGISNRDFVEGVSGGSWVDIVLEHGSCVTTMAKNKPTLDFEVIKTEAKQPATLRKSCFEAKLTNTTTESRCPTLGEPSLNEEQDKRLVCKHSMVDRGWGNGCGLFGKGGIVTCAMFTCKKNMEGKFVHPENLEYTIVITPHSGEEHAVGNDTGKHGKELKITPQSSITEAELTGYGTVTMQCSPRTGLDFNEIVLLQMEDKAWLVHRQWFLDLPLPWLPGADTQGSNWIQKETLVTFKNPHAKKQDVVVLGSQEGAMQTALTGAAEIQMSSGNLLFTGHLKCRLRMDKLQLKGISYSMCTGKFKIVKEFAETQHGTIVIRVQYEGDGSPCKIPFEIIDLEKRHVLGCLITVYPIVTEKDSPVNIEADPPFGDSYIIIGIEPGQLKLHWLKKGSSIGQMFETTMRGAKRMAILGDTAWDFGSLGGVFTSIGKALNQVFGTIYGAAFSGVSWTMKILIGVIITCIGMNSRSTSLSVSLVLVGVVTLYLGGMVHA</sequence>
<organismHost>
    <name type="scientific">Aedes aegypti</name>
    <name type="common">Yellowfever mosquito</name>
    <name type="synonym">Culex aegypti</name>
    <dbReference type="NCBI Taxonomy" id="7159"/>
</organismHost>
<organismHost>
    <name type="scientific">Aedes albopictus</name>
    <name type="common">Asian tiger mosquito</name>
    <name type="synonym">Stegomyia albopicta</name>
    <dbReference type="NCBI Taxonomy" id="7160"/>
</organismHost>
<organismHost>
    <name type="scientific">Aedes furcifer</name>
    <name type="common">Mosquito</name>
    <dbReference type="NCBI Taxonomy" id="299627"/>
</organismHost>
<organismHost>
    <name type="scientific">Aedes taylori</name>
    <name type="common">Mosquito</name>
    <dbReference type="NCBI Taxonomy" id="299628"/>
</organismHost>
<organismHost>
    <name type="scientific">Erythrocebus patas</name>
    <name type="common">Red guenon</name>
    <name type="synonym">Cercopithecus patas</name>
    <dbReference type="NCBI Taxonomy" id="9538"/>
</organismHost>
<organismHost>
    <name type="scientific">Homo sapiens</name>
    <name type="common">Human</name>
    <dbReference type="NCBI Taxonomy" id="9606"/>
</organismHost>
<reference key="1">
    <citation type="journal article" date="1989" name="Nucleic Acids Res.">
        <title>Nucleotide sequence of the envelope protein gene of a Malaysian dengue-2 virus isolated from a patient with dengue fever.</title>
        <authorList>
            <person name="Samuel S."/>
            <person name="Koh C.L."/>
            <person name="Blok J."/>
            <person name="Pang T."/>
            <person name="Lam S.K."/>
        </authorList>
    </citation>
    <scope>NUCLEOTIDE SEQUENCE [GENOMIC RNA]</scope>
</reference>
<proteinExistence type="inferred from homology"/>
<name>POLG_DEN23</name>
<evidence type="ECO:0000250" key="1">
    <source>
        <dbReference type="UniProtKB" id="P14336"/>
    </source>
</evidence>
<evidence type="ECO:0000250" key="2">
    <source>
        <dbReference type="UniProtKB" id="P17763"/>
    </source>
</evidence>
<evidence type="ECO:0000250" key="3">
    <source>
        <dbReference type="UniProtKB" id="P29990"/>
    </source>
</evidence>
<evidence type="ECO:0000255" key="4"/>
<keyword id="KW-1165">Clathrin-mediated endocytosis of virus by host</keyword>
<keyword id="KW-0165">Cleavage on pair of basic residues</keyword>
<keyword id="KW-1015">Disulfide bond</keyword>
<keyword id="KW-1170">Fusion of virus membrane with host endosomal membrane</keyword>
<keyword id="KW-1168">Fusion of virus membrane with host membrane</keyword>
<keyword id="KW-0325">Glycoprotein</keyword>
<keyword id="KW-1038">Host endoplasmic reticulum</keyword>
<keyword id="KW-1043">Host membrane</keyword>
<keyword id="KW-0945">Host-virus interaction</keyword>
<keyword id="KW-1090">Inhibition of host innate immune response by virus</keyword>
<keyword id="KW-0472">Membrane</keyword>
<keyword id="KW-0941">Suppressor of RNA silencing</keyword>
<keyword id="KW-0812">Transmembrane</keyword>
<keyword id="KW-1133">Transmembrane helix</keyword>
<keyword id="KW-1161">Viral attachment to host cell</keyword>
<keyword id="KW-0261">Viral envelope protein</keyword>
<keyword id="KW-0899">Viral immunoevasion</keyword>
<keyword id="KW-0543">Viral nucleoprotein</keyword>
<keyword id="KW-1162">Viral penetration into host cytoplasm</keyword>
<keyword id="KW-0946">Virion</keyword>
<keyword id="KW-1164">Virus endocytosis by host</keyword>
<keyword id="KW-1160">Virus entry into host cell</keyword>
<keyword id="KW-0862">Zinc</keyword>
<dbReference type="EMBL" id="X15214">
    <property type="protein sequence ID" value="CAA33284.1"/>
    <property type="molecule type" value="Genomic_RNA"/>
</dbReference>
<dbReference type="PIR" id="S06740">
    <property type="entry name" value="S06740"/>
</dbReference>
<dbReference type="SMR" id="P14339"/>
<dbReference type="GO" id="GO:0044167">
    <property type="term" value="C:host cell endoplasmic reticulum membrane"/>
    <property type="evidence" value="ECO:0007669"/>
    <property type="project" value="UniProtKB-SubCell"/>
</dbReference>
<dbReference type="GO" id="GO:0016020">
    <property type="term" value="C:membrane"/>
    <property type="evidence" value="ECO:0007669"/>
    <property type="project" value="UniProtKB-KW"/>
</dbReference>
<dbReference type="GO" id="GO:0019031">
    <property type="term" value="C:viral envelope"/>
    <property type="evidence" value="ECO:0007669"/>
    <property type="project" value="UniProtKB-KW"/>
</dbReference>
<dbReference type="GO" id="GO:0019013">
    <property type="term" value="C:viral nucleocapsid"/>
    <property type="evidence" value="ECO:0007669"/>
    <property type="project" value="UniProtKB-KW"/>
</dbReference>
<dbReference type="GO" id="GO:0055036">
    <property type="term" value="C:virion membrane"/>
    <property type="evidence" value="ECO:0007669"/>
    <property type="project" value="UniProtKB-SubCell"/>
</dbReference>
<dbReference type="GO" id="GO:0046983">
    <property type="term" value="F:protein dimerization activity"/>
    <property type="evidence" value="ECO:0007669"/>
    <property type="project" value="InterPro"/>
</dbReference>
<dbReference type="GO" id="GO:0075512">
    <property type="term" value="P:clathrin-dependent endocytosis of virus by host cell"/>
    <property type="evidence" value="ECO:0007669"/>
    <property type="project" value="UniProtKB-KW"/>
</dbReference>
<dbReference type="GO" id="GO:0039654">
    <property type="term" value="P:fusion of virus membrane with host endosome membrane"/>
    <property type="evidence" value="ECO:0007669"/>
    <property type="project" value="UniProtKB-KW"/>
</dbReference>
<dbReference type="GO" id="GO:0052170">
    <property type="term" value="P:symbiont-mediated suppression of host innate immune response"/>
    <property type="evidence" value="ECO:0007669"/>
    <property type="project" value="UniProtKB-KW"/>
</dbReference>
<dbReference type="GO" id="GO:0019062">
    <property type="term" value="P:virion attachment to host cell"/>
    <property type="evidence" value="ECO:0007669"/>
    <property type="project" value="UniProtKB-KW"/>
</dbReference>
<dbReference type="CDD" id="cd12149">
    <property type="entry name" value="Flavi_E_C"/>
    <property type="match status" value="1"/>
</dbReference>
<dbReference type="FunFam" id="1.20.1280.260:FF:000001">
    <property type="entry name" value="Envelope glycoprotein"/>
    <property type="match status" value="1"/>
</dbReference>
<dbReference type="FunFam" id="2.60.40.350:FF:000001">
    <property type="entry name" value="Envelope glycoprotein"/>
    <property type="match status" value="1"/>
</dbReference>
<dbReference type="Gene3D" id="1.20.1280.260">
    <property type="match status" value="1"/>
</dbReference>
<dbReference type="Gene3D" id="2.60.40.350">
    <property type="match status" value="1"/>
</dbReference>
<dbReference type="Gene3D" id="2.60.98.10">
    <property type="entry name" value="Tick-borne Encephalitis virus Glycoprotein, domain 1"/>
    <property type="match status" value="1"/>
</dbReference>
<dbReference type="Gene3D" id="3.30.67.10">
    <property type="entry name" value="Viral Envelope Glycoprotein, domain 2"/>
    <property type="match status" value="1"/>
</dbReference>
<dbReference type="Gene3D" id="3.30.387.10">
    <property type="entry name" value="Viral Envelope Glycoprotein, domain 3"/>
    <property type="match status" value="1"/>
</dbReference>
<dbReference type="InterPro" id="IPR013755">
    <property type="entry name" value="Flav_gly_cen_dom_subdom1"/>
</dbReference>
<dbReference type="InterPro" id="IPR027287">
    <property type="entry name" value="Flavi_E_Ig-like"/>
</dbReference>
<dbReference type="InterPro" id="IPR026470">
    <property type="entry name" value="Flavi_E_Stem/Anchor_dom"/>
</dbReference>
<dbReference type="InterPro" id="IPR038345">
    <property type="entry name" value="Flavi_E_Stem/Anchor_dom_sf"/>
</dbReference>
<dbReference type="InterPro" id="IPR011998">
    <property type="entry name" value="Flavi_Glycoprot_E_cen/dimer"/>
</dbReference>
<dbReference type="InterPro" id="IPR000336">
    <property type="entry name" value="Flavivir/Alphavir_Ig-like_sf"/>
</dbReference>
<dbReference type="InterPro" id="IPR036253">
    <property type="entry name" value="Glycoprot_cen/dimer_sf"/>
</dbReference>
<dbReference type="InterPro" id="IPR038055">
    <property type="entry name" value="Glycoprot_E_dimer_dom"/>
</dbReference>
<dbReference type="InterPro" id="IPR013756">
    <property type="entry name" value="GlyE_cen_dom_subdom2"/>
</dbReference>
<dbReference type="InterPro" id="IPR014756">
    <property type="entry name" value="Ig_E-set"/>
</dbReference>
<dbReference type="NCBIfam" id="TIGR04240">
    <property type="entry name" value="flavi_E_stem"/>
    <property type="match status" value="1"/>
</dbReference>
<dbReference type="Pfam" id="PF21659">
    <property type="entry name" value="Flavi_E_stem"/>
    <property type="match status" value="1"/>
</dbReference>
<dbReference type="Pfam" id="PF02832">
    <property type="entry name" value="Flavi_glycop_C"/>
    <property type="match status" value="1"/>
</dbReference>
<dbReference type="Pfam" id="PF00869">
    <property type="entry name" value="Flavi_glycoprot"/>
    <property type="match status" value="1"/>
</dbReference>
<dbReference type="SUPFAM" id="SSF81296">
    <property type="entry name" value="E set domains"/>
    <property type="match status" value="1"/>
</dbReference>
<dbReference type="SUPFAM" id="SSF56983">
    <property type="entry name" value="Viral glycoprotein, central and dimerisation domains"/>
    <property type="match status" value="1"/>
</dbReference>
<protein>
    <recommendedName>
        <fullName>Genome polyprotein</fullName>
    </recommendedName>
    <component>
        <recommendedName>
            <fullName>Envelope protein E</fullName>
        </recommendedName>
    </component>
</protein>
<comment type="function">
    <molecule>Envelope protein E</molecule>
    <text evidence="2">Binds to host cell surface receptor and mediates fusion between viral and cellular membranes. Envelope protein is synthesized in the endoplasmic reticulum in the form of heterodimer with protein prM. They play a role in virion budding in the ER, and the newly formed immature particle is covered with 60 spikes composed of heterodimer between precursor prM and envelope protein E. The virion is transported to the Golgi apparatus where the low pH causes dissociation of PrM-E heterodimers and formation of E homodimers. prM-E cleavage is inefficient, and many virions are only partially matured. These uncleaved prM would play a role in immune evasion.</text>
</comment>
<comment type="subunit">
    <molecule>Envelope protein E</molecule>
    <text evidence="2">Homodimer; in the endoplasmic reticulum and Golgi. Interacts with protein prM. Interacts with non-structural protein 1.</text>
</comment>
<comment type="subcellular location">
    <molecule>Envelope protein E</molecule>
    <subcellularLocation>
        <location evidence="2">Virion membrane</location>
        <topology evidence="4">Multi-pass membrane protein</topology>
    </subcellularLocation>
    <subcellularLocation>
        <location evidence="2">Host endoplasmic reticulum membrane</location>
        <topology evidence="4">Multi-pass membrane protein</topology>
    </subcellularLocation>
</comment>
<comment type="PTM">
    <molecule>Envelope protein E</molecule>
    <text evidence="2">N-glycosylated.</text>
</comment>
<comment type="PTM">
    <molecule>Genome polyprotein</molecule>
    <text evidence="2">Specific enzymatic cleavages in vivo yield mature proteins. Cleavages in the lumen of endoplasmic reticulum are performed by host signal peptidase, wereas cleavages in the cytoplasmic side are performed by serine protease NS3. Signal cleavage at the 2K-4B site requires a prior NS3 protease-mediated cleavage at the 4A-2K site.</text>
</comment>
<comment type="miscellaneous">
    <text>Isolate M3 comes from a patient with dengue fever.</text>
</comment>
<feature type="chain" id="PRO_0000405209" description="Genome polyprotein">
    <location>
        <begin position="1" status="less than"/>
        <end position="495" status="greater than"/>
    </location>
</feature>
<feature type="chain" id="PRO_0000037916" description="Envelope protein E" evidence="3">
    <location>
        <begin position="1"/>
        <end position="495"/>
    </location>
</feature>
<feature type="topological domain" description="Extracellular" evidence="4">
    <location>
        <begin position="1"/>
        <end position="445"/>
    </location>
</feature>
<feature type="transmembrane region" description="Helical" evidence="4">
    <location>
        <begin position="446"/>
        <end position="466"/>
    </location>
</feature>
<feature type="topological domain" description="Cytoplasmic" evidence="4">
    <location>
        <begin position="467"/>
        <end position="472"/>
    </location>
</feature>
<feature type="transmembrane region" description="Helical" evidence="4">
    <location>
        <begin position="473"/>
        <end position="493"/>
    </location>
</feature>
<feature type="topological domain" description="Extracellular" evidence="4">
    <location>
        <begin position="494"/>
        <end position="495" status="greater than"/>
    </location>
</feature>
<feature type="region of interest" description="Fusion peptide" evidence="1">
    <location>
        <begin position="98"/>
        <end position="111"/>
    </location>
</feature>
<feature type="glycosylation site" description="N-linked (GlcNAc...) asparagine; by host" evidence="4">
    <location>
        <position position="67"/>
    </location>
</feature>
<feature type="glycosylation site" description="N-linked (GlcNAc...) asparagine; by host" evidence="4">
    <location>
        <position position="153"/>
    </location>
</feature>
<feature type="disulfide bond" evidence="2">
    <location>
        <begin position="3"/>
        <end position="30"/>
    </location>
</feature>
<feature type="disulfide bond" evidence="2">
    <location>
        <begin position="60"/>
        <end position="121"/>
    </location>
</feature>
<feature type="disulfide bond" evidence="2">
    <location>
        <begin position="74"/>
        <end position="105"/>
    </location>
</feature>
<feature type="disulfide bond" evidence="2">
    <location>
        <begin position="92"/>
        <end position="116"/>
    </location>
</feature>
<feature type="disulfide bond" evidence="2">
    <location>
        <begin position="185"/>
        <end position="285"/>
    </location>
</feature>
<feature type="disulfide bond" evidence="2">
    <location>
        <begin position="302"/>
        <end position="333"/>
    </location>
</feature>
<feature type="non-terminal residue">
    <location>
        <position position="1"/>
    </location>
</feature>
<feature type="non-terminal residue">
    <location>
        <position position="495"/>
    </location>
</feature>
<accession>P14339</accession>
<organism>
    <name type="scientific">Dengue virus type 2 (isolate Malaysia M3)</name>
    <name type="common">DENV-2</name>
    <dbReference type="NCBI Taxonomy" id="11063"/>
    <lineage>
        <taxon>Viruses</taxon>
        <taxon>Riboviria</taxon>
        <taxon>Orthornavirae</taxon>
        <taxon>Kitrinoviricota</taxon>
        <taxon>Flasuviricetes</taxon>
        <taxon>Amarillovirales</taxon>
        <taxon>Flaviviridae</taxon>
        <taxon>Orthoflavivirus</taxon>
        <taxon>Orthoflavivirus denguei</taxon>
        <taxon>Dengue virus</taxon>
    </lineage>
</organism>